<evidence type="ECO:0000255" key="1">
    <source>
        <dbReference type="HAMAP-Rule" id="MF_01351"/>
    </source>
</evidence>
<feature type="chain" id="PRO_1000143644" description="NADH-quinone oxidoreductase subunit I">
    <location>
        <begin position="1"/>
        <end position="180"/>
    </location>
</feature>
<feature type="domain" description="4Fe-4S ferredoxin-type 1" evidence="1">
    <location>
        <begin position="48"/>
        <end position="80"/>
    </location>
</feature>
<feature type="domain" description="4Fe-4S ferredoxin-type 2" evidence="1">
    <location>
        <begin position="90"/>
        <end position="119"/>
    </location>
</feature>
<feature type="binding site" evidence="1">
    <location>
        <position position="60"/>
    </location>
    <ligand>
        <name>[4Fe-4S] cluster</name>
        <dbReference type="ChEBI" id="CHEBI:49883"/>
        <label>1</label>
    </ligand>
</feature>
<feature type="binding site" evidence="1">
    <location>
        <position position="63"/>
    </location>
    <ligand>
        <name>[4Fe-4S] cluster</name>
        <dbReference type="ChEBI" id="CHEBI:49883"/>
        <label>1</label>
    </ligand>
</feature>
<feature type="binding site" evidence="1">
    <location>
        <position position="66"/>
    </location>
    <ligand>
        <name>[4Fe-4S] cluster</name>
        <dbReference type="ChEBI" id="CHEBI:49883"/>
        <label>1</label>
    </ligand>
</feature>
<feature type="binding site" evidence="1">
    <location>
        <position position="70"/>
    </location>
    <ligand>
        <name>[4Fe-4S] cluster</name>
        <dbReference type="ChEBI" id="CHEBI:49883"/>
        <label>2</label>
    </ligand>
</feature>
<feature type="binding site" evidence="1">
    <location>
        <position position="99"/>
    </location>
    <ligand>
        <name>[4Fe-4S] cluster</name>
        <dbReference type="ChEBI" id="CHEBI:49883"/>
        <label>2</label>
    </ligand>
</feature>
<feature type="binding site" evidence="1">
    <location>
        <position position="102"/>
    </location>
    <ligand>
        <name>[4Fe-4S] cluster</name>
        <dbReference type="ChEBI" id="CHEBI:49883"/>
        <label>2</label>
    </ligand>
</feature>
<feature type="binding site" evidence="1">
    <location>
        <position position="105"/>
    </location>
    <ligand>
        <name>[4Fe-4S] cluster</name>
        <dbReference type="ChEBI" id="CHEBI:49883"/>
        <label>2</label>
    </ligand>
</feature>
<feature type="binding site" evidence="1">
    <location>
        <position position="109"/>
    </location>
    <ligand>
        <name>[4Fe-4S] cluster</name>
        <dbReference type="ChEBI" id="CHEBI:49883"/>
        <label>1</label>
    </ligand>
</feature>
<proteinExistence type="inferred from homology"/>
<reference key="1">
    <citation type="journal article" date="2008" name="Environ. Microbiol.">
        <title>The genome of Erwinia tasmaniensis strain Et1/99, a non-pathogenic bacterium in the genus Erwinia.</title>
        <authorList>
            <person name="Kube M."/>
            <person name="Migdoll A.M."/>
            <person name="Mueller I."/>
            <person name="Kuhl H."/>
            <person name="Beck A."/>
            <person name="Reinhardt R."/>
            <person name="Geider K."/>
        </authorList>
    </citation>
    <scope>NUCLEOTIDE SEQUENCE [LARGE SCALE GENOMIC DNA]</scope>
    <source>
        <strain>DSM 17950 / CFBP 7177 / CIP 109463 / NCPPB 4357 / Et1/99</strain>
    </source>
</reference>
<comment type="function">
    <text evidence="1">NDH-1 shuttles electrons from NADH, via FMN and iron-sulfur (Fe-S) centers, to quinones in the respiratory chain. The immediate electron acceptor for the enzyme in this species is believed to be ubiquinone. Couples the redox reaction to proton translocation (for every two electrons transferred, four hydrogen ions are translocated across the cytoplasmic membrane), and thus conserves the redox energy in a proton gradient.</text>
</comment>
<comment type="catalytic activity">
    <reaction evidence="1">
        <text>a quinone + NADH + 5 H(+)(in) = a quinol + NAD(+) + 4 H(+)(out)</text>
        <dbReference type="Rhea" id="RHEA:57888"/>
        <dbReference type="ChEBI" id="CHEBI:15378"/>
        <dbReference type="ChEBI" id="CHEBI:24646"/>
        <dbReference type="ChEBI" id="CHEBI:57540"/>
        <dbReference type="ChEBI" id="CHEBI:57945"/>
        <dbReference type="ChEBI" id="CHEBI:132124"/>
    </reaction>
</comment>
<comment type="cofactor">
    <cofactor evidence="1">
        <name>[4Fe-4S] cluster</name>
        <dbReference type="ChEBI" id="CHEBI:49883"/>
    </cofactor>
    <text evidence="1">Binds 2 [4Fe-4S] clusters per subunit.</text>
</comment>
<comment type="subunit">
    <text evidence="1">NDH-1 is composed of 13 different subunits. Subunits NuoA, H, J, K, L, M, N constitute the membrane sector of the complex.</text>
</comment>
<comment type="subcellular location">
    <subcellularLocation>
        <location evidence="1">Cell inner membrane</location>
        <topology evidence="1">Peripheral membrane protein</topology>
    </subcellularLocation>
</comment>
<comment type="similarity">
    <text evidence="1">Belongs to the complex I 23 kDa subunit family.</text>
</comment>
<sequence length="180" mass="20279">MTLKDIVVGFGTTVRSIWLIGMNAFAKRETLMYPEEPVYLPPRYRGRIVLTRDPDGQERCVACNLCAVACPVGCISLQKAETADGRWYPEFFRINFSRCIFCGLCEEACPTTAIQLTPDFELGEFKRQDLVYEKENLLISGPGKYPEYNFYRMAGMAIDGKDKGDAENEAKPIDVKGLLP</sequence>
<protein>
    <recommendedName>
        <fullName evidence="1">NADH-quinone oxidoreductase subunit I</fullName>
        <ecNumber evidence="1">7.1.1.-</ecNumber>
    </recommendedName>
    <alternativeName>
        <fullName evidence="1">NADH dehydrogenase I subunit I</fullName>
    </alternativeName>
    <alternativeName>
        <fullName evidence="1">NDH-1 subunit I</fullName>
    </alternativeName>
</protein>
<keyword id="KW-0004">4Fe-4S</keyword>
<keyword id="KW-0997">Cell inner membrane</keyword>
<keyword id="KW-1003">Cell membrane</keyword>
<keyword id="KW-0408">Iron</keyword>
<keyword id="KW-0411">Iron-sulfur</keyword>
<keyword id="KW-0472">Membrane</keyword>
<keyword id="KW-0479">Metal-binding</keyword>
<keyword id="KW-0520">NAD</keyword>
<keyword id="KW-0874">Quinone</keyword>
<keyword id="KW-1185">Reference proteome</keyword>
<keyword id="KW-0677">Repeat</keyword>
<keyword id="KW-1278">Translocase</keyword>
<keyword id="KW-0830">Ubiquinone</keyword>
<dbReference type="EC" id="7.1.1.-" evidence="1"/>
<dbReference type="EMBL" id="CU468135">
    <property type="protein sequence ID" value="CAO96257.1"/>
    <property type="molecule type" value="Genomic_DNA"/>
</dbReference>
<dbReference type="RefSeq" id="WP_004158594.1">
    <property type="nucleotide sequence ID" value="NC_010694.1"/>
</dbReference>
<dbReference type="SMR" id="B2VIN2"/>
<dbReference type="STRING" id="465817.ETA_12110"/>
<dbReference type="GeneID" id="97606567"/>
<dbReference type="KEGG" id="eta:ETA_12110"/>
<dbReference type="eggNOG" id="COG1143">
    <property type="taxonomic scope" value="Bacteria"/>
</dbReference>
<dbReference type="HOGENOM" id="CLU_067218_4_3_6"/>
<dbReference type="OrthoDB" id="9808559at2"/>
<dbReference type="Proteomes" id="UP000001726">
    <property type="component" value="Chromosome"/>
</dbReference>
<dbReference type="GO" id="GO:0005886">
    <property type="term" value="C:plasma membrane"/>
    <property type="evidence" value="ECO:0007669"/>
    <property type="project" value="UniProtKB-SubCell"/>
</dbReference>
<dbReference type="GO" id="GO:0051539">
    <property type="term" value="F:4 iron, 4 sulfur cluster binding"/>
    <property type="evidence" value="ECO:0007669"/>
    <property type="project" value="UniProtKB-KW"/>
</dbReference>
<dbReference type="GO" id="GO:0005506">
    <property type="term" value="F:iron ion binding"/>
    <property type="evidence" value="ECO:0007669"/>
    <property type="project" value="UniProtKB-UniRule"/>
</dbReference>
<dbReference type="GO" id="GO:0050136">
    <property type="term" value="F:NADH:ubiquinone reductase (non-electrogenic) activity"/>
    <property type="evidence" value="ECO:0007669"/>
    <property type="project" value="UniProtKB-UniRule"/>
</dbReference>
<dbReference type="GO" id="GO:0048038">
    <property type="term" value="F:quinone binding"/>
    <property type="evidence" value="ECO:0007669"/>
    <property type="project" value="UniProtKB-KW"/>
</dbReference>
<dbReference type="GO" id="GO:0009060">
    <property type="term" value="P:aerobic respiration"/>
    <property type="evidence" value="ECO:0007669"/>
    <property type="project" value="TreeGrafter"/>
</dbReference>
<dbReference type="FunFam" id="3.30.70.3270:FF:000002">
    <property type="entry name" value="NADH-quinone oxidoreductase subunit I"/>
    <property type="match status" value="1"/>
</dbReference>
<dbReference type="Gene3D" id="3.30.70.3270">
    <property type="match status" value="1"/>
</dbReference>
<dbReference type="HAMAP" id="MF_01351">
    <property type="entry name" value="NDH1_NuoI"/>
    <property type="match status" value="1"/>
</dbReference>
<dbReference type="InterPro" id="IPR017896">
    <property type="entry name" value="4Fe4S_Fe-S-bd"/>
</dbReference>
<dbReference type="InterPro" id="IPR017900">
    <property type="entry name" value="4Fe4S_Fe_S_CS"/>
</dbReference>
<dbReference type="InterPro" id="IPR010226">
    <property type="entry name" value="NADH_quinone_OxRdtase_chainI"/>
</dbReference>
<dbReference type="NCBIfam" id="TIGR01971">
    <property type="entry name" value="NuoI"/>
    <property type="match status" value="1"/>
</dbReference>
<dbReference type="NCBIfam" id="NF004536">
    <property type="entry name" value="PRK05888.1-1"/>
    <property type="match status" value="1"/>
</dbReference>
<dbReference type="PANTHER" id="PTHR10849:SF20">
    <property type="entry name" value="NADH DEHYDROGENASE [UBIQUINONE] IRON-SULFUR PROTEIN 8, MITOCHONDRIAL"/>
    <property type="match status" value="1"/>
</dbReference>
<dbReference type="PANTHER" id="PTHR10849">
    <property type="entry name" value="NADH DEHYDROGENASE UBIQUINONE IRON-SULFUR PROTEIN 8, MITOCHONDRIAL"/>
    <property type="match status" value="1"/>
</dbReference>
<dbReference type="Pfam" id="PF12838">
    <property type="entry name" value="Fer4_7"/>
    <property type="match status" value="1"/>
</dbReference>
<dbReference type="SUPFAM" id="SSF54862">
    <property type="entry name" value="4Fe-4S ferredoxins"/>
    <property type="match status" value="1"/>
</dbReference>
<dbReference type="PROSITE" id="PS00198">
    <property type="entry name" value="4FE4S_FER_1"/>
    <property type="match status" value="2"/>
</dbReference>
<dbReference type="PROSITE" id="PS51379">
    <property type="entry name" value="4FE4S_FER_2"/>
    <property type="match status" value="2"/>
</dbReference>
<name>NUOI_ERWT9</name>
<accession>B2VIN2</accession>
<gene>
    <name evidence="1" type="primary">nuoI</name>
    <name type="ordered locus">ETA_12110</name>
</gene>
<organism>
    <name type="scientific">Erwinia tasmaniensis (strain DSM 17950 / CFBP 7177 / CIP 109463 / NCPPB 4357 / Et1/99)</name>
    <dbReference type="NCBI Taxonomy" id="465817"/>
    <lineage>
        <taxon>Bacteria</taxon>
        <taxon>Pseudomonadati</taxon>
        <taxon>Pseudomonadota</taxon>
        <taxon>Gammaproteobacteria</taxon>
        <taxon>Enterobacterales</taxon>
        <taxon>Erwiniaceae</taxon>
        <taxon>Erwinia</taxon>
    </lineage>
</organism>